<organism>
    <name type="scientific">Cryptophis nigrescens</name>
    <name type="common">Eastern small-eyed snake</name>
    <name type="synonym">Rhinoplocephalus nigrescens</name>
    <dbReference type="NCBI Taxonomy" id="292442"/>
    <lineage>
        <taxon>Eukaryota</taxon>
        <taxon>Metazoa</taxon>
        <taxon>Chordata</taxon>
        <taxon>Craniata</taxon>
        <taxon>Vertebrata</taxon>
        <taxon>Euteleostomi</taxon>
        <taxon>Lepidosauria</taxon>
        <taxon>Squamata</taxon>
        <taxon>Bifurcata</taxon>
        <taxon>Unidentata</taxon>
        <taxon>Episquamata</taxon>
        <taxon>Toxicofera</taxon>
        <taxon>Serpentes</taxon>
        <taxon>Colubroidea</taxon>
        <taxon>Elapidae</taxon>
        <taxon>Hydrophiinae</taxon>
        <taxon>Cryptophis</taxon>
    </lineage>
</organism>
<comment type="function">
    <text evidence="2 3">Nerve growth factor is important for the development and maintenance of the sympathetic and sensory nervous systems. It stimulates division and differentiation of sympathetic and embryonic sensory neurons as well as basal forebrain cholinergic neurons in the brain. Its relevance in the snake venom is not clear. However, it has been shown to inhibit metalloproteinase-dependent proteolysis of platelet glycoprotein Ib alpha, suggesting a metalloproteinase inhibition to prevent metalloprotease autodigestion and/or protection against prey proteases (By similarity). Binds a lipid between the two protein chains in the homodimer. The lipid-bound form promotes histamine relase from mouse mast cells, contrary to the lipid-free form (By similarity).</text>
</comment>
<comment type="subunit">
    <text evidence="2">Homodimer; non-covalently linked.</text>
</comment>
<comment type="subcellular location">
    <subcellularLocation>
        <location evidence="2">Secreted</location>
    </subcellularLocation>
</comment>
<comment type="tissue specificity">
    <text>Expressed by the venom gland.</text>
</comment>
<comment type="similarity">
    <text evidence="6">Belongs to the NGF-beta family.</text>
</comment>
<feature type="signal peptide" evidence="4">
    <location>
        <begin position="1"/>
        <end position="18"/>
    </location>
</feature>
<feature type="propeptide" id="PRO_5000141488" evidence="1">
    <location>
        <begin position="19"/>
        <end position="125"/>
    </location>
</feature>
<feature type="chain" id="PRO_5000141489" description="Venom nerve growth factor">
    <location>
        <begin position="126"/>
        <end position="243"/>
    </location>
</feature>
<feature type="region of interest" description="Disordered" evidence="5">
    <location>
        <begin position="45"/>
        <end position="66"/>
    </location>
</feature>
<feature type="compositionally biased region" description="Basic and acidic residues" evidence="5">
    <location>
        <begin position="46"/>
        <end position="66"/>
    </location>
</feature>
<feature type="glycosylation site" description="N-linked (GlcNAc...) asparagine" evidence="4">
    <location>
        <position position="148"/>
    </location>
</feature>
<feature type="disulfide bond" evidence="2">
    <location>
        <begin position="139"/>
        <end position="204"/>
    </location>
</feature>
<feature type="disulfide bond" evidence="2">
    <location>
        <begin position="182"/>
        <end position="232"/>
    </location>
</feature>
<feature type="disulfide bond" evidence="2">
    <location>
        <begin position="192"/>
        <end position="234"/>
    </location>
</feature>
<name>NGFV_CRYNI</name>
<dbReference type="EMBL" id="DQ422727">
    <property type="protein sequence ID" value="ABD85370.1"/>
    <property type="molecule type" value="mRNA"/>
</dbReference>
<dbReference type="SMR" id="Q1W7Q6"/>
<dbReference type="GO" id="GO:0030424">
    <property type="term" value="C:axon"/>
    <property type="evidence" value="ECO:0007669"/>
    <property type="project" value="TreeGrafter"/>
</dbReference>
<dbReference type="GO" id="GO:0030425">
    <property type="term" value="C:dendrite"/>
    <property type="evidence" value="ECO:0007669"/>
    <property type="project" value="TreeGrafter"/>
</dbReference>
<dbReference type="GO" id="GO:0005615">
    <property type="term" value="C:extracellular space"/>
    <property type="evidence" value="ECO:0007669"/>
    <property type="project" value="TreeGrafter"/>
</dbReference>
<dbReference type="GO" id="GO:0008021">
    <property type="term" value="C:synaptic vesicle"/>
    <property type="evidence" value="ECO:0007669"/>
    <property type="project" value="TreeGrafter"/>
</dbReference>
<dbReference type="GO" id="GO:0008083">
    <property type="term" value="F:growth factor activity"/>
    <property type="evidence" value="ECO:0007669"/>
    <property type="project" value="UniProtKB-KW"/>
</dbReference>
<dbReference type="GO" id="GO:0008289">
    <property type="term" value="F:lipid binding"/>
    <property type="evidence" value="ECO:0007669"/>
    <property type="project" value="UniProtKB-KW"/>
</dbReference>
<dbReference type="GO" id="GO:0008191">
    <property type="term" value="F:metalloendopeptidase inhibitor activity"/>
    <property type="evidence" value="ECO:0000250"/>
    <property type="project" value="UniProtKB"/>
</dbReference>
<dbReference type="GO" id="GO:0005163">
    <property type="term" value="F:nerve growth factor receptor binding"/>
    <property type="evidence" value="ECO:0007669"/>
    <property type="project" value="TreeGrafter"/>
</dbReference>
<dbReference type="GO" id="GO:0090729">
    <property type="term" value="F:toxin activity"/>
    <property type="evidence" value="ECO:0007669"/>
    <property type="project" value="UniProtKB-KW"/>
</dbReference>
<dbReference type="GO" id="GO:0007169">
    <property type="term" value="P:cell surface receptor protein tyrosine kinase signaling pathway"/>
    <property type="evidence" value="ECO:0007669"/>
    <property type="project" value="TreeGrafter"/>
</dbReference>
<dbReference type="GO" id="GO:0050804">
    <property type="term" value="P:modulation of chemical synaptic transmission"/>
    <property type="evidence" value="ECO:0007669"/>
    <property type="project" value="TreeGrafter"/>
</dbReference>
<dbReference type="GO" id="GO:0043524">
    <property type="term" value="P:negative regulation of neuron apoptotic process"/>
    <property type="evidence" value="ECO:0007669"/>
    <property type="project" value="TreeGrafter"/>
</dbReference>
<dbReference type="GO" id="GO:0021675">
    <property type="term" value="P:nerve development"/>
    <property type="evidence" value="ECO:0007669"/>
    <property type="project" value="TreeGrafter"/>
</dbReference>
<dbReference type="GO" id="GO:0038180">
    <property type="term" value="P:nerve growth factor signaling pathway"/>
    <property type="evidence" value="ECO:0007669"/>
    <property type="project" value="TreeGrafter"/>
</dbReference>
<dbReference type="GO" id="GO:0048812">
    <property type="term" value="P:neuron projection morphogenesis"/>
    <property type="evidence" value="ECO:0007669"/>
    <property type="project" value="TreeGrafter"/>
</dbReference>
<dbReference type="FunFam" id="2.10.90.10:FF:000002">
    <property type="entry name" value="Brain-derived neurotrophic factor"/>
    <property type="match status" value="1"/>
</dbReference>
<dbReference type="Gene3D" id="2.10.90.10">
    <property type="entry name" value="Cystine-knot cytokines"/>
    <property type="match status" value="1"/>
</dbReference>
<dbReference type="InterPro" id="IPR029034">
    <property type="entry name" value="Cystine-knot_cytokine"/>
</dbReference>
<dbReference type="InterPro" id="IPR020408">
    <property type="entry name" value="Nerve_growth_factor-like"/>
</dbReference>
<dbReference type="InterPro" id="IPR002072">
    <property type="entry name" value="Nerve_growth_factor-rel"/>
</dbReference>
<dbReference type="InterPro" id="IPR020425">
    <property type="entry name" value="Nerve_growth_factor_bsu"/>
</dbReference>
<dbReference type="InterPro" id="IPR019846">
    <property type="entry name" value="Nerve_growth_factor_CS"/>
</dbReference>
<dbReference type="InterPro" id="IPR020433">
    <property type="entry name" value="Venom_nerve_growth_factor"/>
</dbReference>
<dbReference type="PANTHER" id="PTHR11589:SF10">
    <property type="entry name" value="BETA-NERVE GROWTH FACTOR"/>
    <property type="match status" value="1"/>
</dbReference>
<dbReference type="PANTHER" id="PTHR11589">
    <property type="entry name" value="NERVE GROWTH FACTOR NGF -RELATED"/>
    <property type="match status" value="1"/>
</dbReference>
<dbReference type="Pfam" id="PF00243">
    <property type="entry name" value="NGF"/>
    <property type="match status" value="1"/>
</dbReference>
<dbReference type="PIRSF" id="PIRSF001789">
    <property type="entry name" value="NGF"/>
    <property type="match status" value="1"/>
</dbReference>
<dbReference type="PRINTS" id="PR00268">
    <property type="entry name" value="NGF"/>
</dbReference>
<dbReference type="PRINTS" id="PR01913">
    <property type="entry name" value="NGFBETA"/>
</dbReference>
<dbReference type="PRINTS" id="PR01917">
    <property type="entry name" value="VENOMNGF"/>
</dbReference>
<dbReference type="SMART" id="SM00140">
    <property type="entry name" value="NGF"/>
    <property type="match status" value="1"/>
</dbReference>
<dbReference type="SUPFAM" id="SSF57501">
    <property type="entry name" value="Cystine-knot cytokines"/>
    <property type="match status" value="1"/>
</dbReference>
<dbReference type="PROSITE" id="PS00248">
    <property type="entry name" value="NGF_1"/>
    <property type="match status" value="1"/>
</dbReference>
<dbReference type="PROSITE" id="PS50270">
    <property type="entry name" value="NGF_2"/>
    <property type="match status" value="1"/>
</dbReference>
<protein>
    <recommendedName>
        <fullName>Venom nerve growth factor</fullName>
        <shortName>v-NGF</shortName>
        <shortName>vNGF</shortName>
    </recommendedName>
</protein>
<evidence type="ECO:0000250" key="1"/>
<evidence type="ECO:0000250" key="2">
    <source>
        <dbReference type="UniProtKB" id="P61898"/>
    </source>
</evidence>
<evidence type="ECO:0000250" key="3">
    <source>
        <dbReference type="UniProtKB" id="P61899"/>
    </source>
</evidence>
<evidence type="ECO:0000255" key="4"/>
<evidence type="ECO:0000256" key="5">
    <source>
        <dbReference type="SAM" id="MobiDB-lite"/>
    </source>
</evidence>
<evidence type="ECO:0000305" key="6"/>
<sequence length="243" mass="27576">MSMLCYTLIIAFLIGIWAAPKSEDNVPLGSPTTSDLSDTSCAQTHEGLKTSRNTDQRHLAPKKAEDQELGSAANIIVDPKLFQKRRFQSPRVLFSTQPPPLSRDEQSVEFLDNEDTLNRNIRTKRETHPVHNLGEHSVCDSISVWVTNKTKATDIKDNMVTVMVDINLNNEVYKQYFFETKCRNPNPVPSGCRGTDSRHWNSYCTTTQTFVKALTMEGNRASWRFIRIDTACVCVISRKTDNF</sequence>
<proteinExistence type="evidence at transcript level"/>
<reference key="1">
    <citation type="journal article" date="2006" name="Proteomics">
        <title>Post-translational modification accounts for the presence of varied forms of nerve growth factor in Australian elapid snake venoms.</title>
        <authorList>
            <person name="Earl S.T.H."/>
            <person name="Birrell G.W."/>
            <person name="Wallis T.P."/>
            <person name="St Pierre L."/>
            <person name="Masci P.P."/>
            <person name="de Jersey J."/>
            <person name="Gorman J.J."/>
            <person name="Lavin M.F."/>
        </authorList>
    </citation>
    <scope>NUCLEOTIDE SEQUENCE [MRNA]</scope>
    <source>
        <tissue>Venom gland</tissue>
    </source>
</reference>
<keyword id="KW-0165">Cleavage on pair of basic residues</keyword>
<keyword id="KW-1015">Disulfide bond</keyword>
<keyword id="KW-0325">Glycoprotein</keyword>
<keyword id="KW-0339">Growth factor</keyword>
<keyword id="KW-0446">Lipid-binding</keyword>
<keyword id="KW-0481">Metalloenzyme inhibitor</keyword>
<keyword id="KW-0483">Metalloprotease inhibitor</keyword>
<keyword id="KW-0646">Protease inhibitor</keyword>
<keyword id="KW-0964">Secreted</keyword>
<keyword id="KW-0732">Signal</keyword>
<keyword id="KW-0800">Toxin</keyword>
<accession>Q1W7Q6</accession>